<organism>
    <name type="scientific">Kluyveromyces marxianus</name>
    <name type="common">Yeast</name>
    <name type="synonym">Candida kefyr</name>
    <dbReference type="NCBI Taxonomy" id="4911"/>
    <lineage>
        <taxon>Eukaryota</taxon>
        <taxon>Fungi</taxon>
        <taxon>Dikarya</taxon>
        <taxon>Ascomycota</taxon>
        <taxon>Saccharomycotina</taxon>
        <taxon>Saccharomycetes</taxon>
        <taxon>Saccharomycetales</taxon>
        <taxon>Saccharomycetaceae</taxon>
        <taxon>Kluyveromyces</taxon>
    </lineage>
</organism>
<feature type="transit peptide" description="Mitochondrion" evidence="1">
    <location>
        <begin position="1"/>
        <end position="17"/>
    </location>
</feature>
<feature type="chain" id="PRO_0000431099" description="NADPH quinone oxidoreductase" evidence="1">
    <location>
        <begin position="18"/>
        <end position="380"/>
    </location>
</feature>
<evidence type="ECO:0000255" key="1"/>
<evidence type="ECO:0000269" key="2">
    <source>
    </source>
</evidence>
<evidence type="ECO:0000303" key="3">
    <source>
    </source>
</evidence>
<evidence type="ECO:0000305" key="4"/>
<sequence length="380" mass="41782">MSSFLSKRFISTTQRAMSQLPKAKSLIYSSHDQDVSKILKVHTYQPKGSAESSILLKTLAFPINPSDINQLEGVYPSKPEKVLDYSTEKPSAIAGNKGLFEVVSLPSGVKNLKAGDRVIPLQANFGTWSTYRTCESENDLIKIEGVDLYTAATIAVNGCTAYQMVNDYIEWDPSGNDWLVQNAGTSSVSKIVTQIAKDKGIKTLSVVRDRDNFDEVAENLEKKYGATKVISESQNGEREFGNEVLPKILGPNAQVKLALNSVGGKSCTNIARKLSPNGLMLTYGGMSKQPVTLPTGLFIFNSIRSHGFWVTANSKRDPENKRKTVDAVVKLYRDGKIISPKEDIRTLEWDVNNLSDEGVLDLVNRGIATKGAKNMVVLKW</sequence>
<reference key="1">
    <citation type="journal article" date="2003" name="J. Biochem. Mol. Biol.">
        <title>Molecular cloning and characterization of an NADPH quinone oxidoreductase from Kluyveromyces marxianus.</title>
        <authorList>
            <person name="Kim W.H."/>
            <person name="Chung J.H."/>
            <person name="Back J.H."/>
            <person name="Choi J."/>
            <person name="Cha J.H."/>
            <person name="Koh H.Y."/>
            <person name="Han Y.S."/>
        </authorList>
    </citation>
    <scope>NUCLEOTIDE SEQUENCE [GENOMIC DNA]</scope>
    <scope>SUBUNIT</scope>
    <scope>FUNCTION</scope>
    <scope>CATALYTIC ACTIVITY</scope>
    <scope>BIOPHYSICOCHEMICAL PROPERTIES</scope>
</reference>
<accession>Q8NJJ9</accession>
<gene>
    <name evidence="3" type="primary">QOR</name>
</gene>
<proteinExistence type="evidence at protein level"/>
<comment type="function">
    <text evidence="2">NADPH quinone oxidoreductase that efficiently reduces 1,4-benzoquinone, whereas no activities are found for menadiones and methoxyquinones.</text>
</comment>
<comment type="catalytic activity">
    <reaction evidence="2">
        <text>a quinone + NADH + H(+) = a quinol + NAD(+)</text>
        <dbReference type="Rhea" id="RHEA:46160"/>
        <dbReference type="ChEBI" id="CHEBI:15378"/>
        <dbReference type="ChEBI" id="CHEBI:24646"/>
        <dbReference type="ChEBI" id="CHEBI:57540"/>
        <dbReference type="ChEBI" id="CHEBI:57945"/>
        <dbReference type="ChEBI" id="CHEBI:132124"/>
        <dbReference type="EC" id="1.6.5.2"/>
    </reaction>
</comment>
<comment type="catalytic activity">
    <reaction evidence="2">
        <text>a quinone + NADPH + H(+) = a quinol + NADP(+)</text>
        <dbReference type="Rhea" id="RHEA:46164"/>
        <dbReference type="ChEBI" id="CHEBI:15378"/>
        <dbReference type="ChEBI" id="CHEBI:24646"/>
        <dbReference type="ChEBI" id="CHEBI:57783"/>
        <dbReference type="ChEBI" id="CHEBI:58349"/>
        <dbReference type="ChEBI" id="CHEBI:132124"/>
        <dbReference type="EC" id="1.6.5.2"/>
    </reaction>
</comment>
<comment type="biophysicochemical properties">
    <kinetics>
        <KM evidence="2">1.8 mM for 1,4-benzoquinone</KM>
        <KM evidence="2">298.2 mM for 2,3-dichloro-5,6-dicyano-1,4-benzoquinone</KM>
        <KM evidence="2">728.6 mM for phenyl-1,4-benzoquinone</KM>
        <KM evidence="2">647.5 mM for hydroquinone</KM>
    </kinetics>
</comment>
<comment type="subunit">
    <text evidence="2">Homodimer.</text>
</comment>
<comment type="subcellular location">
    <subcellularLocation>
        <location evidence="1">Mitochondrion</location>
    </subcellularLocation>
</comment>
<comment type="similarity">
    <text evidence="4">Belongs to the zinc-containing alcohol dehydrogenase family. Quinone oxidoreductase subfamily.</text>
</comment>
<protein>
    <recommendedName>
        <fullName evidence="3">NADPH quinone oxidoreductase</fullName>
        <ecNumber evidence="2">1.6.5.2</ecNumber>
    </recommendedName>
</protein>
<dbReference type="EC" id="1.6.5.2" evidence="2"/>
<dbReference type="EMBL" id="AY040868">
    <property type="protein sequence ID" value="AAK77939.1"/>
    <property type="molecule type" value="Genomic_DNA"/>
</dbReference>
<dbReference type="SMR" id="Q8NJJ9"/>
<dbReference type="VEuPathDB" id="FungiDB:KLMA_60271"/>
<dbReference type="BRENDA" id="1.6.5.10">
    <property type="organism ID" value="1120"/>
</dbReference>
<dbReference type="SABIO-RK" id="Q8NJJ9"/>
<dbReference type="GO" id="GO:0005739">
    <property type="term" value="C:mitochondrion"/>
    <property type="evidence" value="ECO:0007669"/>
    <property type="project" value="UniProtKB-SubCell"/>
</dbReference>
<dbReference type="GO" id="GO:0050136">
    <property type="term" value="F:NADH:ubiquinone reductase (non-electrogenic) activity"/>
    <property type="evidence" value="ECO:0007669"/>
    <property type="project" value="RHEA"/>
</dbReference>
<dbReference type="GO" id="GO:0008753">
    <property type="term" value="F:NADPH dehydrogenase (quinone) activity"/>
    <property type="evidence" value="ECO:0007669"/>
    <property type="project" value="RHEA"/>
</dbReference>
<dbReference type="GO" id="GO:0006631">
    <property type="term" value="P:fatty acid metabolic process"/>
    <property type="evidence" value="ECO:0007669"/>
    <property type="project" value="TreeGrafter"/>
</dbReference>
<dbReference type="CDD" id="cd08290">
    <property type="entry name" value="ETR"/>
    <property type="match status" value="1"/>
</dbReference>
<dbReference type="FunFam" id="3.40.50.720:FF:000112">
    <property type="entry name" value="Enoyl-[acyl-carrier-protein] reductase 1, mitochondrial"/>
    <property type="match status" value="1"/>
</dbReference>
<dbReference type="Gene3D" id="3.90.180.10">
    <property type="entry name" value="Medium-chain alcohol dehydrogenases, catalytic domain"/>
    <property type="match status" value="1"/>
</dbReference>
<dbReference type="Gene3D" id="3.40.50.720">
    <property type="entry name" value="NAD(P)-binding Rossmann-like Domain"/>
    <property type="match status" value="1"/>
</dbReference>
<dbReference type="InterPro" id="IPR013154">
    <property type="entry name" value="ADH-like_N"/>
</dbReference>
<dbReference type="InterPro" id="IPR011032">
    <property type="entry name" value="GroES-like_sf"/>
</dbReference>
<dbReference type="InterPro" id="IPR051034">
    <property type="entry name" value="Mito_Enoyl-ACP_Reductase"/>
</dbReference>
<dbReference type="InterPro" id="IPR036291">
    <property type="entry name" value="NAD(P)-bd_dom_sf"/>
</dbReference>
<dbReference type="PANTHER" id="PTHR43981">
    <property type="entry name" value="ENOYL-[ACYL-CARRIER-PROTEIN] REDUCTASE, MITOCHONDRIAL"/>
    <property type="match status" value="1"/>
</dbReference>
<dbReference type="PANTHER" id="PTHR43981:SF2">
    <property type="entry name" value="ENOYL-[ACYL-CARRIER-PROTEIN] REDUCTASE, MITOCHONDRIAL"/>
    <property type="match status" value="1"/>
</dbReference>
<dbReference type="Pfam" id="PF08240">
    <property type="entry name" value="ADH_N"/>
    <property type="match status" value="1"/>
</dbReference>
<dbReference type="SUPFAM" id="SSF50129">
    <property type="entry name" value="GroES-like"/>
    <property type="match status" value="1"/>
</dbReference>
<dbReference type="SUPFAM" id="SSF51735">
    <property type="entry name" value="NAD(P)-binding Rossmann-fold domains"/>
    <property type="match status" value="1"/>
</dbReference>
<keyword id="KW-0496">Mitochondrion</keyword>
<keyword id="KW-0521">NADP</keyword>
<keyword id="KW-0560">Oxidoreductase</keyword>
<keyword id="KW-0809">Transit peptide</keyword>
<name>QOR_KLUMA</name>